<name>DDL_STRE4</name>
<gene>
    <name evidence="2" type="primary">ddl</name>
    <name type="ordered locus">SEQ_0662</name>
</gene>
<proteinExistence type="inferred from homology"/>
<organism>
    <name type="scientific">Streptococcus equi subsp. equi (strain 4047)</name>
    <dbReference type="NCBI Taxonomy" id="553482"/>
    <lineage>
        <taxon>Bacteria</taxon>
        <taxon>Bacillati</taxon>
        <taxon>Bacillota</taxon>
        <taxon>Bacilli</taxon>
        <taxon>Lactobacillales</taxon>
        <taxon>Streptococcaceae</taxon>
        <taxon>Streptococcus</taxon>
    </lineage>
</organism>
<reference key="1">
    <citation type="journal article" date="2009" name="PLoS Pathog.">
        <title>Genomic evidence for the evolution of Streptococcus equi: host restriction, increased virulence, and genetic exchange with human pathogens.</title>
        <authorList>
            <person name="Holden M.T.G."/>
            <person name="Heather Z."/>
            <person name="Paillot R."/>
            <person name="Steward K.F."/>
            <person name="Webb K."/>
            <person name="Ainslie F."/>
            <person name="Jourdan T."/>
            <person name="Bason N.C."/>
            <person name="Holroyd N.E."/>
            <person name="Mungall K."/>
            <person name="Quail M.A."/>
            <person name="Sanders M."/>
            <person name="Simmonds M."/>
            <person name="Willey D."/>
            <person name="Brooks K."/>
            <person name="Aanensen D.M."/>
            <person name="Spratt B.G."/>
            <person name="Jolley K.A."/>
            <person name="Maiden M.C.J."/>
            <person name="Kehoe M."/>
            <person name="Chanter N."/>
            <person name="Bentley S.D."/>
            <person name="Robinson C."/>
            <person name="Maskell D.J."/>
            <person name="Parkhill J."/>
            <person name="Waller A.S."/>
        </authorList>
    </citation>
    <scope>NUCLEOTIDE SEQUENCE [LARGE SCALE GENOMIC DNA]</scope>
    <source>
        <strain>4047</strain>
    </source>
</reference>
<evidence type="ECO:0000250" key="1"/>
<evidence type="ECO:0000255" key="2">
    <source>
        <dbReference type="HAMAP-Rule" id="MF_00047"/>
    </source>
</evidence>
<sequence>MSKQTLILLYGGRSAEREVSVLSAESVMRAVDYTKFFVKTYFISQTGQFIKTQEFSSRPTLTERLMTNDTIRLEQQIRPSDIYEEGAVVFPVLHGPMGEDGSIQGFLEVLKMPYVGTNILSSSVAMDKITTKRVLESAGIPQVAYTVYIEGQDLDRCLAETEAVLSYPVFVKPANMGSSVGISKAESEEELRAAILLALTYDSRILIEQGVLAREIEVGLLGNTDVKSTLPGEVVKNVDFYDYQAKYIDNEITMAIPAAIDESAMTSMRTYAETAFKAIGACGLSRCDFFLGQDGQIYLNELNTMPGFTQWSMYPLLWEHMGLSYAELIEELVRLAQEMFEKREGHLI</sequence>
<keyword id="KW-0067">ATP-binding</keyword>
<keyword id="KW-0133">Cell shape</keyword>
<keyword id="KW-0961">Cell wall biogenesis/degradation</keyword>
<keyword id="KW-0963">Cytoplasm</keyword>
<keyword id="KW-0436">Ligase</keyword>
<keyword id="KW-0460">Magnesium</keyword>
<keyword id="KW-0464">Manganese</keyword>
<keyword id="KW-0479">Metal-binding</keyword>
<keyword id="KW-0547">Nucleotide-binding</keyword>
<keyword id="KW-0573">Peptidoglycan synthesis</keyword>
<feature type="chain" id="PRO_1000189746" description="D-alanine--D-alanine ligase">
    <location>
        <begin position="1"/>
        <end position="348"/>
    </location>
</feature>
<feature type="domain" description="ATP-grasp" evidence="2">
    <location>
        <begin position="132"/>
        <end position="334"/>
    </location>
</feature>
<feature type="binding site" evidence="2">
    <location>
        <begin position="162"/>
        <end position="217"/>
    </location>
    <ligand>
        <name>ATP</name>
        <dbReference type="ChEBI" id="CHEBI:30616"/>
    </ligand>
</feature>
<feature type="binding site" evidence="2">
    <location>
        <position position="288"/>
    </location>
    <ligand>
        <name>Mg(2+)</name>
        <dbReference type="ChEBI" id="CHEBI:18420"/>
        <label>1</label>
    </ligand>
</feature>
<feature type="binding site" evidence="2">
    <location>
        <position position="301"/>
    </location>
    <ligand>
        <name>Mg(2+)</name>
        <dbReference type="ChEBI" id="CHEBI:18420"/>
        <label>1</label>
    </ligand>
</feature>
<feature type="binding site" evidence="2">
    <location>
        <position position="301"/>
    </location>
    <ligand>
        <name>Mg(2+)</name>
        <dbReference type="ChEBI" id="CHEBI:18420"/>
        <label>2</label>
    </ligand>
</feature>
<feature type="binding site" evidence="2">
    <location>
        <position position="303"/>
    </location>
    <ligand>
        <name>Mg(2+)</name>
        <dbReference type="ChEBI" id="CHEBI:18420"/>
        <label>2</label>
    </ligand>
</feature>
<dbReference type="EC" id="6.3.2.4" evidence="2"/>
<dbReference type="EMBL" id="FM204883">
    <property type="protein sequence ID" value="CAW92994.1"/>
    <property type="molecule type" value="Genomic_DNA"/>
</dbReference>
<dbReference type="RefSeq" id="WP_012679201.1">
    <property type="nucleotide sequence ID" value="NC_012471.1"/>
</dbReference>
<dbReference type="SMR" id="C0M8S4"/>
<dbReference type="KEGG" id="seu:SEQ_0662"/>
<dbReference type="HOGENOM" id="CLU_039268_0_0_9"/>
<dbReference type="OrthoDB" id="9813261at2"/>
<dbReference type="UniPathway" id="UPA00219"/>
<dbReference type="Proteomes" id="UP000001365">
    <property type="component" value="Chromosome"/>
</dbReference>
<dbReference type="GO" id="GO:0005829">
    <property type="term" value="C:cytosol"/>
    <property type="evidence" value="ECO:0007669"/>
    <property type="project" value="TreeGrafter"/>
</dbReference>
<dbReference type="GO" id="GO:0005524">
    <property type="term" value="F:ATP binding"/>
    <property type="evidence" value="ECO:0007669"/>
    <property type="project" value="UniProtKB-KW"/>
</dbReference>
<dbReference type="GO" id="GO:0008716">
    <property type="term" value="F:D-alanine-D-alanine ligase activity"/>
    <property type="evidence" value="ECO:0007669"/>
    <property type="project" value="UniProtKB-UniRule"/>
</dbReference>
<dbReference type="GO" id="GO:0046872">
    <property type="term" value="F:metal ion binding"/>
    <property type="evidence" value="ECO:0007669"/>
    <property type="project" value="UniProtKB-KW"/>
</dbReference>
<dbReference type="GO" id="GO:0071555">
    <property type="term" value="P:cell wall organization"/>
    <property type="evidence" value="ECO:0007669"/>
    <property type="project" value="UniProtKB-KW"/>
</dbReference>
<dbReference type="GO" id="GO:0009252">
    <property type="term" value="P:peptidoglycan biosynthetic process"/>
    <property type="evidence" value="ECO:0007669"/>
    <property type="project" value="UniProtKB-UniRule"/>
</dbReference>
<dbReference type="GO" id="GO:0008360">
    <property type="term" value="P:regulation of cell shape"/>
    <property type="evidence" value="ECO:0007669"/>
    <property type="project" value="UniProtKB-KW"/>
</dbReference>
<dbReference type="FunFam" id="3.30.1490.20:FF:000007">
    <property type="entry name" value="D-alanine--D-alanine ligase"/>
    <property type="match status" value="1"/>
</dbReference>
<dbReference type="FunFam" id="3.30.470.20:FF:000008">
    <property type="entry name" value="D-alanine--D-alanine ligase"/>
    <property type="match status" value="1"/>
</dbReference>
<dbReference type="Gene3D" id="3.40.50.20">
    <property type="match status" value="1"/>
</dbReference>
<dbReference type="Gene3D" id="3.30.1490.20">
    <property type="entry name" value="ATP-grasp fold, A domain"/>
    <property type="match status" value="1"/>
</dbReference>
<dbReference type="Gene3D" id="3.30.470.20">
    <property type="entry name" value="ATP-grasp fold, B domain"/>
    <property type="match status" value="1"/>
</dbReference>
<dbReference type="HAMAP" id="MF_00047">
    <property type="entry name" value="Dala_Dala_lig"/>
    <property type="match status" value="1"/>
</dbReference>
<dbReference type="InterPro" id="IPR011761">
    <property type="entry name" value="ATP-grasp"/>
</dbReference>
<dbReference type="InterPro" id="IPR013815">
    <property type="entry name" value="ATP_grasp_subdomain_1"/>
</dbReference>
<dbReference type="InterPro" id="IPR000291">
    <property type="entry name" value="D-Ala_lig_Van_CS"/>
</dbReference>
<dbReference type="InterPro" id="IPR005905">
    <property type="entry name" value="D_ala_D_ala"/>
</dbReference>
<dbReference type="InterPro" id="IPR011095">
    <property type="entry name" value="Dala_Dala_lig_C"/>
</dbReference>
<dbReference type="InterPro" id="IPR011127">
    <property type="entry name" value="Dala_Dala_lig_N"/>
</dbReference>
<dbReference type="InterPro" id="IPR016185">
    <property type="entry name" value="PreATP-grasp_dom_sf"/>
</dbReference>
<dbReference type="NCBIfam" id="TIGR01205">
    <property type="entry name" value="D_ala_D_alaTIGR"/>
    <property type="match status" value="1"/>
</dbReference>
<dbReference type="NCBIfam" id="NF002528">
    <property type="entry name" value="PRK01966.1-4"/>
    <property type="match status" value="1"/>
</dbReference>
<dbReference type="NCBIfam" id="NF002529">
    <property type="entry name" value="PRK01966.1-5"/>
    <property type="match status" value="1"/>
</dbReference>
<dbReference type="PANTHER" id="PTHR23132">
    <property type="entry name" value="D-ALANINE--D-ALANINE LIGASE"/>
    <property type="match status" value="1"/>
</dbReference>
<dbReference type="PANTHER" id="PTHR23132:SF25">
    <property type="entry name" value="D-ALANINE--D-ALANINE LIGASE A"/>
    <property type="match status" value="1"/>
</dbReference>
<dbReference type="Pfam" id="PF07478">
    <property type="entry name" value="Dala_Dala_lig_C"/>
    <property type="match status" value="1"/>
</dbReference>
<dbReference type="Pfam" id="PF01820">
    <property type="entry name" value="Dala_Dala_lig_N"/>
    <property type="match status" value="1"/>
</dbReference>
<dbReference type="PIRSF" id="PIRSF039102">
    <property type="entry name" value="Ddl/VanB"/>
    <property type="match status" value="1"/>
</dbReference>
<dbReference type="SUPFAM" id="SSF56059">
    <property type="entry name" value="Glutathione synthetase ATP-binding domain-like"/>
    <property type="match status" value="1"/>
</dbReference>
<dbReference type="SUPFAM" id="SSF52440">
    <property type="entry name" value="PreATP-grasp domain"/>
    <property type="match status" value="1"/>
</dbReference>
<dbReference type="PROSITE" id="PS50975">
    <property type="entry name" value="ATP_GRASP"/>
    <property type="match status" value="1"/>
</dbReference>
<dbReference type="PROSITE" id="PS00843">
    <property type="entry name" value="DALA_DALA_LIGASE_1"/>
    <property type="match status" value="1"/>
</dbReference>
<dbReference type="PROSITE" id="PS00844">
    <property type="entry name" value="DALA_DALA_LIGASE_2"/>
    <property type="match status" value="1"/>
</dbReference>
<accession>C0M8S4</accession>
<protein>
    <recommendedName>
        <fullName evidence="2">D-alanine--D-alanine ligase</fullName>
        <ecNumber evidence="2">6.3.2.4</ecNumber>
    </recommendedName>
    <alternativeName>
        <fullName evidence="2">D-Ala-D-Ala ligase</fullName>
    </alternativeName>
    <alternativeName>
        <fullName evidence="2">D-alanylalanine synthetase</fullName>
    </alternativeName>
</protein>
<comment type="function">
    <text evidence="2">Cell wall formation.</text>
</comment>
<comment type="catalytic activity">
    <reaction evidence="2">
        <text>2 D-alanine + ATP = D-alanyl-D-alanine + ADP + phosphate + H(+)</text>
        <dbReference type="Rhea" id="RHEA:11224"/>
        <dbReference type="ChEBI" id="CHEBI:15378"/>
        <dbReference type="ChEBI" id="CHEBI:30616"/>
        <dbReference type="ChEBI" id="CHEBI:43474"/>
        <dbReference type="ChEBI" id="CHEBI:57416"/>
        <dbReference type="ChEBI" id="CHEBI:57822"/>
        <dbReference type="ChEBI" id="CHEBI:456216"/>
        <dbReference type="EC" id="6.3.2.4"/>
    </reaction>
</comment>
<comment type="cofactor">
    <cofactor evidence="1">
        <name>Mg(2+)</name>
        <dbReference type="ChEBI" id="CHEBI:18420"/>
    </cofactor>
    <cofactor evidence="1">
        <name>Mn(2+)</name>
        <dbReference type="ChEBI" id="CHEBI:29035"/>
    </cofactor>
    <text evidence="1">Binds 2 magnesium or manganese ions per subunit.</text>
</comment>
<comment type="pathway">
    <text evidence="2">Cell wall biogenesis; peptidoglycan biosynthesis.</text>
</comment>
<comment type="subcellular location">
    <subcellularLocation>
        <location evidence="2">Cytoplasm</location>
    </subcellularLocation>
</comment>
<comment type="similarity">
    <text evidence="2">Belongs to the D-alanine--D-alanine ligase family.</text>
</comment>